<feature type="chain" id="PRO_0000128588" description="Large ribosomal subunit protein uL14c">
    <location>
        <begin position="1"/>
        <end position="121"/>
    </location>
</feature>
<comment type="function">
    <text evidence="1">Binds to 23S rRNA.</text>
</comment>
<comment type="subunit">
    <text evidence="1">Part of the 50S ribosomal subunit.</text>
</comment>
<comment type="subcellular location">
    <subcellularLocation>
        <location>Plastid</location>
        <location>Chloroplast</location>
    </subcellularLocation>
</comment>
<comment type="similarity">
    <text evidence="1">Belongs to the universal ribosomal protein uL14 family.</text>
</comment>
<geneLocation type="chloroplast"/>
<dbReference type="EMBL" id="AF041468">
    <property type="protein sequence ID" value="AAC35713.1"/>
    <property type="molecule type" value="Genomic_DNA"/>
</dbReference>
<dbReference type="RefSeq" id="NP_050779.1">
    <property type="nucleotide sequence ID" value="NC_000926.1"/>
</dbReference>
<dbReference type="SMR" id="O46904"/>
<dbReference type="GeneID" id="857087"/>
<dbReference type="HOGENOM" id="CLU_095071_2_1_1"/>
<dbReference type="OMA" id="IVCVVQK"/>
<dbReference type="GO" id="GO:0009507">
    <property type="term" value="C:chloroplast"/>
    <property type="evidence" value="ECO:0007669"/>
    <property type="project" value="UniProtKB-SubCell"/>
</dbReference>
<dbReference type="GO" id="GO:0005762">
    <property type="term" value="C:mitochondrial large ribosomal subunit"/>
    <property type="evidence" value="ECO:0007669"/>
    <property type="project" value="TreeGrafter"/>
</dbReference>
<dbReference type="GO" id="GO:0070180">
    <property type="term" value="F:large ribosomal subunit rRNA binding"/>
    <property type="evidence" value="ECO:0007669"/>
    <property type="project" value="TreeGrafter"/>
</dbReference>
<dbReference type="GO" id="GO:0003735">
    <property type="term" value="F:structural constituent of ribosome"/>
    <property type="evidence" value="ECO:0007669"/>
    <property type="project" value="InterPro"/>
</dbReference>
<dbReference type="GO" id="GO:0006412">
    <property type="term" value="P:translation"/>
    <property type="evidence" value="ECO:0007669"/>
    <property type="project" value="UniProtKB-UniRule"/>
</dbReference>
<dbReference type="CDD" id="cd00337">
    <property type="entry name" value="Ribosomal_uL14"/>
    <property type="match status" value="1"/>
</dbReference>
<dbReference type="FunFam" id="2.40.150.20:FF:000001">
    <property type="entry name" value="50S ribosomal protein L14"/>
    <property type="match status" value="1"/>
</dbReference>
<dbReference type="Gene3D" id="2.40.150.20">
    <property type="entry name" value="Ribosomal protein L14"/>
    <property type="match status" value="1"/>
</dbReference>
<dbReference type="HAMAP" id="MF_01367">
    <property type="entry name" value="Ribosomal_uL14"/>
    <property type="match status" value="1"/>
</dbReference>
<dbReference type="InterPro" id="IPR000218">
    <property type="entry name" value="Ribosomal_uL14"/>
</dbReference>
<dbReference type="InterPro" id="IPR005745">
    <property type="entry name" value="Ribosomal_uL14_bac-type"/>
</dbReference>
<dbReference type="InterPro" id="IPR036853">
    <property type="entry name" value="Ribosomal_uL14_sf"/>
</dbReference>
<dbReference type="NCBIfam" id="TIGR01067">
    <property type="entry name" value="rplN_bact"/>
    <property type="match status" value="1"/>
</dbReference>
<dbReference type="PANTHER" id="PTHR11761">
    <property type="entry name" value="50S/60S RIBOSOMAL PROTEIN L14/L23"/>
    <property type="match status" value="1"/>
</dbReference>
<dbReference type="PANTHER" id="PTHR11761:SF3">
    <property type="entry name" value="LARGE RIBOSOMAL SUBUNIT PROTEIN UL14M"/>
    <property type="match status" value="1"/>
</dbReference>
<dbReference type="Pfam" id="PF00238">
    <property type="entry name" value="Ribosomal_L14"/>
    <property type="match status" value="1"/>
</dbReference>
<dbReference type="SMART" id="SM01374">
    <property type="entry name" value="Ribosomal_L14"/>
    <property type="match status" value="1"/>
</dbReference>
<dbReference type="SUPFAM" id="SSF50193">
    <property type="entry name" value="Ribosomal protein L14"/>
    <property type="match status" value="1"/>
</dbReference>
<name>RK14_GUITH</name>
<keyword id="KW-0150">Chloroplast</keyword>
<keyword id="KW-0934">Plastid</keyword>
<keyword id="KW-0687">Ribonucleoprotein</keyword>
<keyword id="KW-0689">Ribosomal protein</keyword>
<keyword id="KW-0694">RNA-binding</keyword>
<keyword id="KW-0699">rRNA-binding</keyword>
<gene>
    <name evidence="1" type="primary">rpl14</name>
</gene>
<protein>
    <recommendedName>
        <fullName evidence="1">Large ribosomal subunit protein uL14c</fullName>
    </recommendedName>
    <alternativeName>
        <fullName evidence="2">50S ribosomal protein L14, chloroplastic</fullName>
    </alternativeName>
</protein>
<accession>O46904</accession>
<proteinExistence type="inferred from homology"/>
<sequence>MIQTQTYLTVADNSGAKKIMCIRILGGNRKYASIGDVIIGVVKDATPNMPVKRSDVVRAVIMRTKNTIRRKDGMSIRFDDNAAVIINKENNPRGTRVFGPIARELRDKDFTKIVSLAPEVL</sequence>
<reference key="1">
    <citation type="journal article" date="1997" name="Biochem. Mol. Biol. Int.">
        <title>The large ribosomal protein gene cluster of a cryptomonad plastid: gene organization, sequence and evolutionary implications.</title>
        <authorList>
            <person name="Wang S.L."/>
            <person name="Liu X.-Q."/>
            <person name="Douglas S.E."/>
        </authorList>
    </citation>
    <scope>NUCLEOTIDE SEQUENCE [GENOMIC DNA]</scope>
</reference>
<reference key="2">
    <citation type="journal article" date="1999" name="J. Mol. Evol.">
        <title>The plastid genome of the cryptophyte alga, Guillardia theta: complete sequence and conserved synteny groups confirm its common ancestry with red algae.</title>
        <authorList>
            <person name="Douglas S.E."/>
            <person name="Penny S.L."/>
        </authorList>
    </citation>
    <scope>NUCLEOTIDE SEQUENCE [LARGE SCALE GENOMIC DNA]</scope>
</reference>
<organism>
    <name type="scientific">Guillardia theta</name>
    <name type="common">Cryptophyte</name>
    <name type="synonym">Cryptomonas phi</name>
    <dbReference type="NCBI Taxonomy" id="55529"/>
    <lineage>
        <taxon>Eukaryota</taxon>
        <taxon>Cryptophyceae</taxon>
        <taxon>Pyrenomonadales</taxon>
        <taxon>Geminigeraceae</taxon>
        <taxon>Guillardia</taxon>
    </lineage>
</organism>
<evidence type="ECO:0000255" key="1">
    <source>
        <dbReference type="HAMAP-Rule" id="MF_01367"/>
    </source>
</evidence>
<evidence type="ECO:0000305" key="2"/>